<keyword id="KW-0240">DNA-directed RNA polymerase</keyword>
<keyword id="KW-0479">Metal-binding</keyword>
<keyword id="KW-0539">Nucleus</keyword>
<keyword id="KW-1185">Reference proteome</keyword>
<keyword id="KW-0804">Transcription</keyword>
<keyword id="KW-0862">Zinc</keyword>
<sequence>MIVPVRCFSCGKVVGDKWEAYLNMLQEEELDEGTALSRLGLKRYCCRRMILTHVDLIEKFLRYNPLEKRD</sequence>
<organism>
    <name type="scientific">Eremothecium gossypii (strain ATCC 10895 / CBS 109.51 / FGSC 9923 / NRRL Y-1056)</name>
    <name type="common">Yeast</name>
    <name type="synonym">Ashbya gossypii</name>
    <dbReference type="NCBI Taxonomy" id="284811"/>
    <lineage>
        <taxon>Eukaryota</taxon>
        <taxon>Fungi</taxon>
        <taxon>Dikarya</taxon>
        <taxon>Ascomycota</taxon>
        <taxon>Saccharomycotina</taxon>
        <taxon>Saccharomycetes</taxon>
        <taxon>Saccharomycetales</taxon>
        <taxon>Saccharomycetaceae</taxon>
        <taxon>Eremothecium</taxon>
    </lineage>
</organism>
<gene>
    <name type="primary">RPB10</name>
    <name type="ordered locus">ACR163W</name>
</gene>
<feature type="chain" id="PRO_0000121339" description="DNA-directed RNA polymerases I, II, and III subunit RPABC5">
    <location>
        <begin position="1"/>
        <end position="70"/>
    </location>
</feature>
<feature type="binding site" evidence="1">
    <location>
        <position position="7"/>
    </location>
    <ligand>
        <name>Zn(2+)</name>
        <dbReference type="ChEBI" id="CHEBI:29105"/>
    </ligand>
</feature>
<feature type="binding site" evidence="1">
    <location>
        <position position="10"/>
    </location>
    <ligand>
        <name>Zn(2+)</name>
        <dbReference type="ChEBI" id="CHEBI:29105"/>
    </ligand>
</feature>
<feature type="binding site" evidence="1">
    <location>
        <position position="45"/>
    </location>
    <ligand>
        <name>Zn(2+)</name>
        <dbReference type="ChEBI" id="CHEBI:29105"/>
    </ligand>
</feature>
<feature type="binding site" evidence="1">
    <location>
        <position position="46"/>
    </location>
    <ligand>
        <name>Zn(2+)</name>
        <dbReference type="ChEBI" id="CHEBI:29105"/>
    </ligand>
</feature>
<proteinExistence type="inferred from homology"/>
<comment type="function">
    <text evidence="1">DNA-dependent RNA polymerase catalyzes the transcription of DNA into RNA using the four ribonucleoside triphosphates as substrates. Common component of RNA polymerases I, II and III which synthesize ribosomal RNA precursors, mRNA precursors and many functional non-coding RNAs, and a small RNAs, such as 5S rRNA and tRNAs, respectively. Pol II is the central component of the basal RNA polymerase II transcription machinery. Pols are composed of mobile elements that move relative to each other. In Pol II, RBP10 is part of the core element with the central large cleft (By similarity).</text>
</comment>
<comment type="subunit">
    <text evidence="1">Component of the RNA polymerase I (Pol I), RNA polymerase II (Pol II) and RNA polymerase III (Pol III) complexes consisting of 14, 12 and 17 subunits, respectively.</text>
</comment>
<comment type="subcellular location">
    <subcellularLocation>
        <location evidence="1">Nucleus</location>
    </subcellularLocation>
</comment>
<comment type="similarity">
    <text evidence="2">Belongs to the archaeal Rpo10/eukaryotic RPB10 RNA polymerase subunit family.</text>
</comment>
<dbReference type="EMBL" id="AE016816">
    <property type="protein sequence ID" value="AAS51389.1"/>
    <property type="molecule type" value="Genomic_DNA"/>
</dbReference>
<dbReference type="RefSeq" id="NP_983565.1">
    <property type="nucleotide sequence ID" value="NM_208918.1"/>
</dbReference>
<dbReference type="SMR" id="Q75BV8"/>
<dbReference type="FunCoup" id="Q75BV8">
    <property type="interactions" value="550"/>
</dbReference>
<dbReference type="STRING" id="284811.Q75BV8"/>
<dbReference type="EnsemblFungi" id="AAS51389">
    <property type="protein sequence ID" value="AAS51389"/>
    <property type="gene ID" value="AGOS_ACR163W"/>
</dbReference>
<dbReference type="GeneID" id="4619697"/>
<dbReference type="KEGG" id="ago:AGOS_ACR163W"/>
<dbReference type="eggNOG" id="KOG3497">
    <property type="taxonomic scope" value="Eukaryota"/>
</dbReference>
<dbReference type="HOGENOM" id="CLU_143122_2_1_1"/>
<dbReference type="InParanoid" id="Q75BV8"/>
<dbReference type="OMA" id="YCCRRMF"/>
<dbReference type="OrthoDB" id="10258858at2759"/>
<dbReference type="Proteomes" id="UP000000591">
    <property type="component" value="Chromosome III"/>
</dbReference>
<dbReference type="GO" id="GO:0005736">
    <property type="term" value="C:RNA polymerase I complex"/>
    <property type="evidence" value="ECO:0000318"/>
    <property type="project" value="GO_Central"/>
</dbReference>
<dbReference type="GO" id="GO:0005665">
    <property type="term" value="C:RNA polymerase II, core complex"/>
    <property type="evidence" value="ECO:0000318"/>
    <property type="project" value="GO_Central"/>
</dbReference>
<dbReference type="GO" id="GO:0005666">
    <property type="term" value="C:RNA polymerase III complex"/>
    <property type="evidence" value="ECO:0000318"/>
    <property type="project" value="GO_Central"/>
</dbReference>
<dbReference type="GO" id="GO:0003677">
    <property type="term" value="F:DNA binding"/>
    <property type="evidence" value="ECO:0007669"/>
    <property type="project" value="InterPro"/>
</dbReference>
<dbReference type="GO" id="GO:0003899">
    <property type="term" value="F:DNA-directed RNA polymerase activity"/>
    <property type="evidence" value="ECO:0007669"/>
    <property type="project" value="InterPro"/>
</dbReference>
<dbReference type="GO" id="GO:0008270">
    <property type="term" value="F:zinc ion binding"/>
    <property type="evidence" value="ECO:0000318"/>
    <property type="project" value="GO_Central"/>
</dbReference>
<dbReference type="GO" id="GO:0006360">
    <property type="term" value="P:transcription by RNA polymerase I"/>
    <property type="evidence" value="ECO:0000318"/>
    <property type="project" value="GO_Central"/>
</dbReference>
<dbReference type="GO" id="GO:0006366">
    <property type="term" value="P:transcription by RNA polymerase II"/>
    <property type="evidence" value="ECO:0000318"/>
    <property type="project" value="GO_Central"/>
</dbReference>
<dbReference type="GO" id="GO:0042797">
    <property type="term" value="P:tRNA transcription by RNA polymerase III"/>
    <property type="evidence" value="ECO:0000318"/>
    <property type="project" value="GO_Central"/>
</dbReference>
<dbReference type="FunFam" id="1.10.10.60:FF:000024">
    <property type="entry name" value="DNA-directed RNA polymerases I, II, and III subunit"/>
    <property type="match status" value="1"/>
</dbReference>
<dbReference type="Gene3D" id="1.10.10.60">
    <property type="entry name" value="Homeodomain-like"/>
    <property type="match status" value="1"/>
</dbReference>
<dbReference type="HAMAP" id="MF_00250">
    <property type="entry name" value="RNApol_arch_Rpo10"/>
    <property type="match status" value="1"/>
</dbReference>
<dbReference type="InterPro" id="IPR023580">
    <property type="entry name" value="RNA_pol_su_RPB10"/>
</dbReference>
<dbReference type="InterPro" id="IPR020789">
    <property type="entry name" value="RNA_pol_suN_Zn-BS"/>
</dbReference>
<dbReference type="InterPro" id="IPR000268">
    <property type="entry name" value="RPABC5/Rpb10"/>
</dbReference>
<dbReference type="NCBIfam" id="NF003089">
    <property type="entry name" value="PRK04016.1"/>
    <property type="match status" value="1"/>
</dbReference>
<dbReference type="PANTHER" id="PTHR23431:SF3">
    <property type="entry name" value="DNA-DIRECTED RNA POLYMERASES I, II, AND III SUBUNIT RPABC5"/>
    <property type="match status" value="1"/>
</dbReference>
<dbReference type="PANTHER" id="PTHR23431">
    <property type="entry name" value="DNA-DIRECTED RNA POLYMERASES I, II, AND III SUBUNIT RPABC5 FAMILY MEMBER"/>
    <property type="match status" value="1"/>
</dbReference>
<dbReference type="Pfam" id="PF01194">
    <property type="entry name" value="RNA_pol_N"/>
    <property type="match status" value="1"/>
</dbReference>
<dbReference type="PIRSF" id="PIRSF005653">
    <property type="entry name" value="RNA_pol_N/8_sub"/>
    <property type="match status" value="1"/>
</dbReference>
<dbReference type="SUPFAM" id="SSF46924">
    <property type="entry name" value="RNA polymerase subunit RPB10"/>
    <property type="match status" value="1"/>
</dbReference>
<dbReference type="PROSITE" id="PS01112">
    <property type="entry name" value="RNA_POL_N_8KD"/>
    <property type="match status" value="1"/>
</dbReference>
<accession>Q75BV8</accession>
<name>RPAB5_EREGS</name>
<protein>
    <recommendedName>
        <fullName>DNA-directed RNA polymerases I, II, and III subunit RPABC5</fullName>
        <shortName>RNA polymerases I, II, and III subunit ABC5</shortName>
    </recommendedName>
    <alternativeName>
        <fullName>RPB10</fullName>
    </alternativeName>
</protein>
<evidence type="ECO:0000250" key="1"/>
<evidence type="ECO:0000305" key="2"/>
<reference key="1">
    <citation type="journal article" date="2004" name="Science">
        <title>The Ashbya gossypii genome as a tool for mapping the ancient Saccharomyces cerevisiae genome.</title>
        <authorList>
            <person name="Dietrich F.S."/>
            <person name="Voegeli S."/>
            <person name="Brachat S."/>
            <person name="Lerch A."/>
            <person name="Gates K."/>
            <person name="Steiner S."/>
            <person name="Mohr C."/>
            <person name="Poehlmann R."/>
            <person name="Luedi P."/>
            <person name="Choi S."/>
            <person name="Wing R.A."/>
            <person name="Flavier A."/>
            <person name="Gaffney T.D."/>
            <person name="Philippsen P."/>
        </authorList>
    </citation>
    <scope>NUCLEOTIDE SEQUENCE [LARGE SCALE GENOMIC DNA]</scope>
    <source>
        <strain>ATCC 10895 / CBS 109.51 / FGSC 9923 / NRRL Y-1056</strain>
    </source>
</reference>
<reference key="2">
    <citation type="journal article" date="2013" name="G3 (Bethesda)">
        <title>Genomes of Ashbya fungi isolated from insects reveal four mating-type loci, numerous translocations, lack of transposons, and distinct gene duplications.</title>
        <authorList>
            <person name="Dietrich F.S."/>
            <person name="Voegeli S."/>
            <person name="Kuo S."/>
            <person name="Philippsen P."/>
        </authorList>
    </citation>
    <scope>GENOME REANNOTATION</scope>
    <source>
        <strain>ATCC 10895 / CBS 109.51 / FGSC 9923 / NRRL Y-1056</strain>
    </source>
</reference>